<dbReference type="EMBL" id="CP001102">
    <property type="protein sequence ID" value="ACE06091.1"/>
    <property type="molecule type" value="Genomic_DNA"/>
</dbReference>
<dbReference type="RefSeq" id="WP_012472858.1">
    <property type="nucleotide sequence ID" value="NC_010830.1"/>
</dbReference>
<dbReference type="SMR" id="B3ES89"/>
<dbReference type="STRING" id="452471.Aasi_0702"/>
<dbReference type="KEGG" id="aas:Aasi_0702"/>
<dbReference type="eggNOG" id="COG0216">
    <property type="taxonomic scope" value="Bacteria"/>
</dbReference>
<dbReference type="HOGENOM" id="CLU_036856_0_1_10"/>
<dbReference type="OrthoDB" id="9806673at2"/>
<dbReference type="Proteomes" id="UP000001227">
    <property type="component" value="Chromosome"/>
</dbReference>
<dbReference type="GO" id="GO:0005737">
    <property type="term" value="C:cytoplasm"/>
    <property type="evidence" value="ECO:0007669"/>
    <property type="project" value="UniProtKB-SubCell"/>
</dbReference>
<dbReference type="GO" id="GO:0016149">
    <property type="term" value="F:translation release factor activity, codon specific"/>
    <property type="evidence" value="ECO:0007669"/>
    <property type="project" value="UniProtKB-UniRule"/>
</dbReference>
<dbReference type="FunFam" id="3.30.160.20:FF:000004">
    <property type="entry name" value="Peptide chain release factor 1"/>
    <property type="match status" value="1"/>
</dbReference>
<dbReference type="FunFam" id="3.30.70.1660:FF:000002">
    <property type="entry name" value="Peptide chain release factor 1"/>
    <property type="match status" value="1"/>
</dbReference>
<dbReference type="Gene3D" id="3.30.160.20">
    <property type="match status" value="1"/>
</dbReference>
<dbReference type="Gene3D" id="3.30.70.1660">
    <property type="match status" value="1"/>
</dbReference>
<dbReference type="Gene3D" id="6.10.140.1950">
    <property type="match status" value="1"/>
</dbReference>
<dbReference type="HAMAP" id="MF_00093">
    <property type="entry name" value="Rel_fac_1"/>
    <property type="match status" value="1"/>
</dbReference>
<dbReference type="InterPro" id="IPR005139">
    <property type="entry name" value="PCRF"/>
</dbReference>
<dbReference type="InterPro" id="IPR000352">
    <property type="entry name" value="Pep_chain_release_fac_I"/>
</dbReference>
<dbReference type="InterPro" id="IPR045853">
    <property type="entry name" value="Pep_chain_release_fac_I_sf"/>
</dbReference>
<dbReference type="InterPro" id="IPR050057">
    <property type="entry name" value="Prokaryotic/Mito_RF"/>
</dbReference>
<dbReference type="InterPro" id="IPR004373">
    <property type="entry name" value="RF-1"/>
</dbReference>
<dbReference type="NCBIfam" id="TIGR00019">
    <property type="entry name" value="prfA"/>
    <property type="match status" value="1"/>
</dbReference>
<dbReference type="NCBIfam" id="NF001859">
    <property type="entry name" value="PRK00591.1"/>
    <property type="match status" value="1"/>
</dbReference>
<dbReference type="PANTHER" id="PTHR43804">
    <property type="entry name" value="LD18447P"/>
    <property type="match status" value="1"/>
</dbReference>
<dbReference type="PANTHER" id="PTHR43804:SF7">
    <property type="entry name" value="LD18447P"/>
    <property type="match status" value="1"/>
</dbReference>
<dbReference type="Pfam" id="PF03462">
    <property type="entry name" value="PCRF"/>
    <property type="match status" value="1"/>
</dbReference>
<dbReference type="Pfam" id="PF00472">
    <property type="entry name" value="RF-1"/>
    <property type="match status" value="1"/>
</dbReference>
<dbReference type="SMART" id="SM00937">
    <property type="entry name" value="PCRF"/>
    <property type="match status" value="1"/>
</dbReference>
<dbReference type="SUPFAM" id="SSF75620">
    <property type="entry name" value="Release factor"/>
    <property type="match status" value="1"/>
</dbReference>
<feature type="chain" id="PRO_1000093420" description="Peptide chain release factor 1">
    <location>
        <begin position="1"/>
        <end position="355"/>
    </location>
</feature>
<feature type="modified residue" description="N5-methylglutamine" evidence="1">
    <location>
        <position position="233"/>
    </location>
</feature>
<reference key="1">
    <citation type="journal article" date="2010" name="J. Bacteriol.">
        <title>The genome of the amoeba symbiont 'Candidatus Amoebophilus asiaticus' reveals common mechanisms for host cell interaction among amoeba-associated bacteria.</title>
        <authorList>
            <person name="Schmitz-Esser S."/>
            <person name="Tischler P."/>
            <person name="Arnold R."/>
            <person name="Montanaro J."/>
            <person name="Wagner M."/>
            <person name="Rattei T."/>
            <person name="Horn M."/>
        </authorList>
    </citation>
    <scope>NUCLEOTIDE SEQUENCE [LARGE SCALE GENOMIC DNA]</scope>
    <source>
        <strain>5a2</strain>
    </source>
</reference>
<proteinExistence type="inferred from homology"/>
<protein>
    <recommendedName>
        <fullName evidence="1">Peptide chain release factor 1</fullName>
        <shortName evidence="1">RF-1</shortName>
    </recommendedName>
</protein>
<organism>
    <name type="scientific">Amoebophilus asiaticus (strain 5a2)</name>
    <dbReference type="NCBI Taxonomy" id="452471"/>
    <lineage>
        <taxon>Bacteria</taxon>
        <taxon>Pseudomonadati</taxon>
        <taxon>Bacteroidota</taxon>
        <taxon>Cytophagia</taxon>
        <taxon>Cytophagales</taxon>
        <taxon>Amoebophilaceae</taxon>
        <taxon>Candidatus Amoebophilus</taxon>
    </lineage>
</organism>
<keyword id="KW-0963">Cytoplasm</keyword>
<keyword id="KW-0488">Methylation</keyword>
<keyword id="KW-0648">Protein biosynthesis</keyword>
<keyword id="KW-1185">Reference proteome</keyword>
<comment type="function">
    <text evidence="1">Peptide chain release factor 1 directs the termination of translation in response to the peptide chain termination codons UAG and UAA.</text>
</comment>
<comment type="subcellular location">
    <subcellularLocation>
        <location evidence="1">Cytoplasm</location>
    </subcellularLocation>
</comment>
<comment type="PTM">
    <text evidence="1">Methylated by PrmC. Methylation increases the termination efficiency of RF1.</text>
</comment>
<comment type="similarity">
    <text evidence="1">Belongs to the prokaryotic/mitochondrial release factor family.</text>
</comment>
<evidence type="ECO:0000255" key="1">
    <source>
        <dbReference type="HAMAP-Rule" id="MF_00093"/>
    </source>
</evidence>
<gene>
    <name evidence="1" type="primary">prfA</name>
    <name type="ordered locus">Aasi_0702</name>
</gene>
<name>RF1_AMOA5</name>
<sequence length="355" mass="39636">MIDKLEAIEKKYEEVSKQIVDPSIMADMKQYASLNKTYKELSKIVDVYTVYKSNLANLESAKTLLSIEKDAAFRDLAKEEIDSLELQKTQLEEDLKFLLLPKDPNDSKNVILEIRAGTGGDEAGIFAGDLFRMYSRFAEKMQWKLSIIEEVESTSGGYKEIICSIAGEGAYGMLKYESGVHRVQRVPATETQGRIHTSAASVVVLPEMDEVEVDLDMNDIRKDTFCSSGPGGQSVNTTYSAIRLTHIPTGIVVSCQDEKSQIKNLEKALKVLRARLYEQELKKQQDAIGAERRSMVKSGDRSDKIRTYNFPQGRVTDHRIGYTIHNLPAVMDGAVGDLIEALQLADNAERLQQGA</sequence>
<accession>B3ES89</accession>